<name>FTMH_ASPFM</name>
<comment type="function">
    <text evidence="2 3 4 5 6 7 8 9 12 13">12-alpha,13-alpha-dihydroxyfumitremorgin C prenyltransferase; part of the gene cluster that mediates the biosynthesis of fumitremorgins, indole alkaloids that carry not only intriguing chemical structures, but also interesting biological and pharmacological activities (PubMed:18683158, PubMed:23649274). The biosynthesis of fumitremorgin-type alkaloids begins by condensation of the two amino acids L-tryptophan and L-proline to brevianamide F, catalyzed by the non-ribosomal peptide synthetase ftmA (PubMed:16755625). Brevianamide F is then prenylated by the prenyltransferase ftmPT1/ftmB in the presence of dimethylallyl diphosphate, resulting in the formation of tryprostatin B (PubMed:16000710, PubMed:21105662, PubMed:23090579). The three cytochrome P450 monooxygenases, ftmP450-1/ftmC, ftmP450-2/ftmE and ftmP450-3/FtmG, are responsible for the conversion of tryprostatin B to 6-hydroxytryprostatin B, tryprostatin A to fumitremorgin C and fumitremorgin C to 12,13-dihydroxyfumitremorgin C, respectively (PubMed:19226505). The putative methyltransferase ftmMT/ftmD is expected for the conversion of 6-hydroxytryprostatin B to tryprostatin A (Probable). FtmPT2/FtmH catalyzes the prenylation of 12,13-dihydroxyfumitre-morgin C in the presence of dimethylallyl diphosphate, resulting in the formation of fumitremorgin B (PubMed:18683158). Fumitremorgin B is further converted to verruculogen by ftmOx1/ftmF via the insertion of an endoperoxide bond between the two prenyl moieties (PubMed:19763315). In some fungal species, verruculogen is further converted to fumitremorgin A, but the enzymes involved in this step have not been identified yet (Probable).</text>
</comment>
<comment type="catalytic activity">
    <reaction evidence="4">
        <text>12alpha,13alpha-dihydroxyfumitremorgin C + dimethylallyl diphosphate = fumitremorgin B + diphosphate</text>
        <dbReference type="Rhea" id="RHEA:35971"/>
        <dbReference type="ChEBI" id="CHEBI:33019"/>
        <dbReference type="ChEBI" id="CHEBI:57623"/>
        <dbReference type="ChEBI" id="CHEBI:64531"/>
        <dbReference type="ChEBI" id="CHEBI:72764"/>
        <dbReference type="EC" id="2.5.1.110"/>
    </reaction>
</comment>
<comment type="pathway">
    <text evidence="4 9">Mycotoxin biosynthesis.</text>
</comment>
<comment type="similarity">
    <text evidence="12">Belongs to the tryptophan dimethylallyltransferase family.</text>
</comment>
<reference key="1">
    <citation type="journal article" date="2009" name="ChemBioChem">
        <title>Identification of cytochrome P450s required for fumitremorgin biosynthesis in Aspergillus fumigatus.</title>
        <authorList>
            <person name="Kato N."/>
            <person name="Suzuki H."/>
            <person name="Takagi H."/>
            <person name="Asami Y."/>
            <person name="Kakeya H."/>
            <person name="Uramoto M."/>
            <person name="Usui T."/>
            <person name="Takahashi S."/>
            <person name="Sugimoto Y."/>
            <person name="Osada H."/>
        </authorList>
    </citation>
    <scope>NUCLEOTIDE SEQUENCE [GENOMIC DNA]</scope>
    <scope>FUNCTION</scope>
    <source>
        <strain>BM939</strain>
    </source>
</reference>
<reference key="2">
    <citation type="journal article" date="2008" name="ChemBioChem">
        <title>FtmPT2, an N-prenyltransferase from Aspergillus fumigatus, catalyses the last step in the biosynthesis of fumitremorgin B.</title>
        <authorList>
            <person name="Grundmann A."/>
            <person name="Kuznetsova T."/>
            <person name="Afiyatullov S.S."/>
            <person name="Li S.M."/>
        </authorList>
    </citation>
    <scope>NUCLEOTIDE SEQUENCE [MRNA]</scope>
    <scope>FUNCTION</scope>
    <scope>CATALYTIC ACTIVITY</scope>
    <scope>PATHWAY</scope>
    <source>
        <strain>NIH 5233 / ATCC 13073</strain>
    </source>
</reference>
<reference key="3">
    <citation type="journal article" date="2005" name="Microbiology">
        <title>Overproduction, purification and characterization of FtmPT1, a brevianamide F prenyltransferase from Aspergillus fumigatus.</title>
        <authorList>
            <person name="Grundmann A."/>
            <person name="Li S.M."/>
        </authorList>
    </citation>
    <scope>FUNCTION</scope>
</reference>
<reference key="4">
    <citation type="journal article" date="2006" name="ChemBioChem">
        <title>The fumitremorgin gene cluster of Aspergillus fumigatus: identification of a gene encoding brevianamide F synthetase.</title>
        <authorList>
            <person name="Maiya S."/>
            <person name="Grundmann A."/>
            <person name="Li S.M."/>
            <person name="Turner G."/>
        </authorList>
    </citation>
    <scope>FUNCTION</scope>
</reference>
<reference key="5">
    <citation type="journal article" date="2009" name="Org. Biomol. Chem.">
        <title>FtmOx1, a non-heme Fe(II) and alpha-ketoglutarate-dependent dioxygenase, catalyses the endoperoxide formation of verruculogen in Aspergillus fumigatus.</title>
        <authorList>
            <person name="Steffan N."/>
            <person name="Grundmann A."/>
            <person name="Afiyatullov S."/>
            <person name="Ruan H."/>
            <person name="Li S.M."/>
        </authorList>
    </citation>
    <scope>FUNCTION</scope>
</reference>
<reference key="6">
    <citation type="journal article" date="2010" name="J. Am. Chem. Soc.">
        <title>Structure-function analysis of an enzymatic prenyl transfer reaction identifies a reaction chamber with modifiable specificity.</title>
        <authorList>
            <person name="Jost M."/>
            <person name="Zocher G."/>
            <person name="Tarcz S."/>
            <person name="Matuschek M."/>
            <person name="Xie X."/>
            <person name="Li S.M."/>
            <person name="Stehle T."/>
        </authorList>
    </citation>
    <scope>FUNCTION</scope>
</reference>
<reference key="7">
    <citation type="journal article" date="2012" name="Org. Biomol. Chem.">
        <title>Breaking the regioselectivity of indole prenyltransferases: identification of regular C3-prenylated hexahydropyrrolo[2,3-b]indoles as side products of the regular C2-prenyltransferase FtmPT1.</title>
        <authorList>
            <person name="Wollinsky B."/>
            <person name="Ludwig L."/>
            <person name="Xie X."/>
            <person name="Li S.M."/>
        </authorList>
    </citation>
    <scope>FUNCTION</scope>
</reference>
<reference key="8">
    <citation type="journal article" date="2013" name="Biosci. Biotechnol. Biochem.">
        <title>A point mutation in ftmD blocks the fumitremorgin biosynthetic pathway in Aspergillus fumigatus strain Af293.</title>
        <authorList>
            <person name="Kato N."/>
            <person name="Suzuki H."/>
            <person name="Okumura H."/>
            <person name="Takahashi S."/>
            <person name="Osada H."/>
        </authorList>
    </citation>
    <scope>FUNCTION</scope>
    <scope>PATHWAY</scope>
</reference>
<evidence type="ECO:0000250" key="1">
    <source>
        <dbReference type="UniProtKB" id="Q4WAW7"/>
    </source>
</evidence>
<evidence type="ECO:0000269" key="2">
    <source>
    </source>
</evidence>
<evidence type="ECO:0000269" key="3">
    <source>
    </source>
</evidence>
<evidence type="ECO:0000269" key="4">
    <source>
    </source>
</evidence>
<evidence type="ECO:0000269" key="5">
    <source>
    </source>
</evidence>
<evidence type="ECO:0000269" key="6">
    <source>
    </source>
</evidence>
<evidence type="ECO:0000269" key="7">
    <source>
    </source>
</evidence>
<evidence type="ECO:0000269" key="8">
    <source>
    </source>
</evidence>
<evidence type="ECO:0000269" key="9">
    <source>
    </source>
</evidence>
<evidence type="ECO:0000303" key="10">
    <source>
    </source>
</evidence>
<evidence type="ECO:0000303" key="11">
    <source>
    </source>
</evidence>
<evidence type="ECO:0000305" key="12"/>
<evidence type="ECO:0000305" key="13">
    <source>
    </source>
</evidence>
<sequence length="427" mass="48584">MTIPTEISCPEEDAFQLLDKFSWFPSDDQRRWWEYTGPYLLKLLRDAKYPQKDQVPCLYLLQQLLVPYLGTFPVVGQAPLPWWSNVTTYGVPFELSWNLLHNIVRIGFEPLSHLAESGVDAFNKTAPEECVSRLACLDNTIDLARFRHFQHHLLVTPEEETWLLREKAPLPKSGRGQQTLAVEFQNGGISAKAYFFPGMKSLATGLSPGKLILDSIERLALPGLKEPVHHLRSTLGLQDDGHPTDTAIAPFLLGVDLCTPERSRLKFYVTDQVVSWDRVADMWTLRGKRLEDPQCADGLALLRKLWDLLAIPEGYRSNIRPDFAFGTPPPEDYRPVMMANWTLSPKKKFPDPQIYLLTVGMNDAVVMDALVAFYEVLGWTDLASTYKDKVASYFPGPDFTKTNYIHSGVSFSYRHSKPYLSVYYSPF</sequence>
<feature type="chain" id="PRO_0000424114" description="12-alpha,13-alpha-dihydroxyfumitremorgin C prenyltransferase">
    <location>
        <begin position="1"/>
        <end position="427"/>
    </location>
</feature>
<feature type="binding site" evidence="1">
    <location>
        <position position="94"/>
    </location>
    <ligand>
        <name>substrate</name>
    </ligand>
</feature>
<feature type="binding site" evidence="1">
    <location>
        <position position="105"/>
    </location>
    <ligand>
        <name>dimethylallyl diphosphate</name>
        <dbReference type="ChEBI" id="CHEBI:57623"/>
    </ligand>
</feature>
<feature type="binding site" evidence="1">
    <location>
        <position position="192"/>
    </location>
    <ligand>
        <name>dimethylallyl diphosphate</name>
        <dbReference type="ChEBI" id="CHEBI:57623"/>
    </ligand>
</feature>
<feature type="binding site" evidence="1">
    <location>
        <position position="194"/>
    </location>
    <ligand>
        <name>dimethylallyl diphosphate</name>
        <dbReference type="ChEBI" id="CHEBI:57623"/>
    </ligand>
</feature>
<feature type="binding site" evidence="1">
    <location>
        <position position="268"/>
    </location>
    <ligand>
        <name>dimethylallyl diphosphate</name>
        <dbReference type="ChEBI" id="CHEBI:57623"/>
    </ligand>
</feature>
<feature type="binding site" evidence="1">
    <location>
        <position position="353"/>
    </location>
    <ligand>
        <name>dimethylallyl diphosphate</name>
        <dbReference type="ChEBI" id="CHEBI:57623"/>
    </ligand>
</feature>
<feature type="binding site" evidence="1">
    <location>
        <position position="355"/>
    </location>
    <ligand>
        <name>dimethylallyl diphosphate</name>
        <dbReference type="ChEBI" id="CHEBI:57623"/>
    </ligand>
</feature>
<feature type="binding site" evidence="1">
    <location>
        <position position="419"/>
    </location>
    <ligand>
        <name>dimethylallyl diphosphate</name>
        <dbReference type="ChEBI" id="CHEBI:57623"/>
    </ligand>
</feature>
<feature type="binding site" evidence="1">
    <location>
        <position position="423"/>
    </location>
    <ligand>
        <name>dimethylallyl diphosphate</name>
        <dbReference type="ChEBI" id="CHEBI:57623"/>
    </ligand>
</feature>
<feature type="sequence conflict" description="In Ref. 2; ACF22981." evidence="12" ref="2">
    <original>R</original>
    <variation>K</variation>
    <location>
        <position position="165"/>
    </location>
</feature>
<feature type="sequence conflict" description="In Ref. 2; ACF22981." evidence="12" ref="2">
    <original>P</original>
    <variation>A</variation>
    <location>
        <position position="171"/>
    </location>
</feature>
<protein>
    <recommendedName>
        <fullName evidence="10">12-alpha,13-alpha-dihydroxyfumitremorgin C prenyltransferase</fullName>
        <ecNumber evidence="4">2.5.1.110</ecNumber>
    </recommendedName>
    <alternativeName>
        <fullName evidence="11">Fumitremorgin biosynthesis protein H</fullName>
    </alternativeName>
</protein>
<keyword id="KW-0017">Alkaloid metabolism</keyword>
<keyword id="KW-0637">Prenyltransferase</keyword>
<keyword id="KW-0808">Transferase</keyword>
<keyword id="KW-0843">Virulence</keyword>
<dbReference type="EC" id="2.5.1.110" evidence="4"/>
<dbReference type="EMBL" id="AB436628">
    <property type="protein sequence ID" value="BAH24002.1"/>
    <property type="molecule type" value="Genomic_DNA"/>
</dbReference>
<dbReference type="EMBL" id="EU622826">
    <property type="protein sequence ID" value="ACF22981.1"/>
    <property type="molecule type" value="mRNA"/>
</dbReference>
<dbReference type="SMR" id="B9WZX7"/>
<dbReference type="BioCyc" id="MetaCyc:MONOMER-18768"/>
<dbReference type="BRENDA" id="2.5.1.110">
    <property type="organism ID" value="508"/>
</dbReference>
<dbReference type="GO" id="GO:0004659">
    <property type="term" value="F:prenyltransferase activity"/>
    <property type="evidence" value="ECO:0007669"/>
    <property type="project" value="UniProtKB-KW"/>
</dbReference>
<dbReference type="GO" id="GO:1902181">
    <property type="term" value="P:verruculogen biosynthetic process"/>
    <property type="evidence" value="ECO:0000314"/>
    <property type="project" value="GO_Central"/>
</dbReference>
<dbReference type="CDD" id="cd13929">
    <property type="entry name" value="PT-DMATS_CymD"/>
    <property type="match status" value="1"/>
</dbReference>
<dbReference type="InterPro" id="IPR033964">
    <property type="entry name" value="Aro_prenylTrfase"/>
</dbReference>
<dbReference type="InterPro" id="IPR017795">
    <property type="entry name" value="Aro_prenylTrfase_DMATS"/>
</dbReference>
<dbReference type="InterPro" id="IPR012148">
    <property type="entry name" value="DMATS-type_fun"/>
</dbReference>
<dbReference type="NCBIfam" id="TIGR03429">
    <property type="entry name" value="arom_pren_DMATS"/>
    <property type="match status" value="1"/>
</dbReference>
<dbReference type="PANTHER" id="PTHR40627">
    <property type="entry name" value="INDOLE PRENYLTRANSFERASE TDIB-RELATED"/>
    <property type="match status" value="1"/>
</dbReference>
<dbReference type="PANTHER" id="PTHR40627:SF3">
    <property type="entry name" value="PRENYLTRANSFERASE ASQH2-RELATED"/>
    <property type="match status" value="1"/>
</dbReference>
<dbReference type="Pfam" id="PF11991">
    <property type="entry name" value="Trp_DMAT"/>
    <property type="match status" value="1"/>
</dbReference>
<dbReference type="PIRSF" id="PIRSF000509">
    <property type="entry name" value="Trp_DMAT"/>
    <property type="match status" value="1"/>
</dbReference>
<dbReference type="SFLD" id="SFLDS00036">
    <property type="entry name" value="Aromatic_Prenyltransferase"/>
    <property type="match status" value="1"/>
</dbReference>
<dbReference type="SFLD" id="SFLDG01162">
    <property type="entry name" value="I"/>
    <property type="match status" value="1"/>
</dbReference>
<organism>
    <name type="scientific">Aspergillus fumigatus</name>
    <name type="common">Neosartorya fumigata</name>
    <dbReference type="NCBI Taxonomy" id="746128"/>
    <lineage>
        <taxon>Eukaryota</taxon>
        <taxon>Fungi</taxon>
        <taxon>Dikarya</taxon>
        <taxon>Ascomycota</taxon>
        <taxon>Pezizomycotina</taxon>
        <taxon>Eurotiomycetes</taxon>
        <taxon>Eurotiomycetidae</taxon>
        <taxon>Eurotiales</taxon>
        <taxon>Aspergillaceae</taxon>
        <taxon>Aspergillus</taxon>
        <taxon>Aspergillus subgen. Fumigati</taxon>
    </lineage>
</organism>
<proteinExistence type="evidence at protein level"/>
<accession>B9WZX7</accession>
<accession>D3TIT5</accession>
<gene>
    <name evidence="10" type="primary">ftmPT2</name>
    <name evidence="11" type="synonym">ftmH</name>
</gene>